<protein>
    <recommendedName>
        <fullName evidence="1">Probable protein kinase UbiB</fullName>
        <ecNumber evidence="1">2.7.-.-</ecNumber>
    </recommendedName>
    <alternativeName>
        <fullName evidence="1">Ubiquinone biosynthesis protein UbiB</fullName>
    </alternativeName>
</protein>
<accession>B5XYH9</accession>
<gene>
    <name evidence="1" type="primary">ubiB</name>
    <name type="ordered locus">KPK_5342</name>
</gene>
<organism>
    <name type="scientific">Klebsiella pneumoniae (strain 342)</name>
    <dbReference type="NCBI Taxonomy" id="507522"/>
    <lineage>
        <taxon>Bacteria</taxon>
        <taxon>Pseudomonadati</taxon>
        <taxon>Pseudomonadota</taxon>
        <taxon>Gammaproteobacteria</taxon>
        <taxon>Enterobacterales</taxon>
        <taxon>Enterobacteriaceae</taxon>
        <taxon>Klebsiella/Raoultella group</taxon>
        <taxon>Klebsiella</taxon>
        <taxon>Klebsiella pneumoniae complex</taxon>
    </lineage>
</organism>
<name>UBIB_KLEP3</name>
<sequence length="546" mass="63433">MTPGELRRLYFIIHTFLSYGLDELIPKIRLTLPLRIWRRMLFWMPNRHQDQPLGTRLRLALQELGPVWIKFGQMLSTRRDLFPPHIADQLALLQDRVAPFEGKLAQQQIEKAMGGLPVDAWFDDFSVEPLASASIAQVHTARLKENGKEVVIKVIRPDILPIIKADMKLIYRLARWVPRLLPDGRRLRPQEVVREYEKTLLDELNLLRESANAIQLRRNFEDSPMLYVPEVYPDYCSESMMVMERIYGIPVSDVEALEAQGTNMQLLAERGVQVFFTQVFRDSFFHADMHPGNIFVSYEHPEDPQYIGIDCGIVGSLNKEDKRYLAENFIAFFNRDYRKVAELHVDSGWVPPDTNVEEFEFAIRTVCEPIFEKPLAEISFGHVLLNLFNTARRFNMEVQPQLVLLQKTLLYVEGVGRQLYPQLDLWKTAKPFLESWIKDQVGIPALVRAFKDKAPFWIERMPEIPELVYQSLQQSKQLQTSVDTIVRDMHVRHVRQGQSRYLFGIGAVLLLSGTLLFIHRPEWGMMPGWLMAGGVVTWLIGWRKTH</sequence>
<reference key="1">
    <citation type="journal article" date="2008" name="PLoS Genet.">
        <title>Complete genome sequence of the N2-fixing broad host range endophyte Klebsiella pneumoniae 342 and virulence predictions verified in mice.</title>
        <authorList>
            <person name="Fouts D.E."/>
            <person name="Tyler H.L."/>
            <person name="DeBoy R.T."/>
            <person name="Daugherty S."/>
            <person name="Ren Q."/>
            <person name="Badger J.H."/>
            <person name="Durkin A.S."/>
            <person name="Huot H."/>
            <person name="Shrivastava S."/>
            <person name="Kothari S."/>
            <person name="Dodson R.J."/>
            <person name="Mohamoud Y."/>
            <person name="Khouri H."/>
            <person name="Roesch L.F.W."/>
            <person name="Krogfelt K.A."/>
            <person name="Struve C."/>
            <person name="Triplett E.W."/>
            <person name="Methe B.A."/>
        </authorList>
    </citation>
    <scope>NUCLEOTIDE SEQUENCE [LARGE SCALE GENOMIC DNA]</scope>
    <source>
        <strain>342</strain>
    </source>
</reference>
<comment type="function">
    <text evidence="1">Is probably a protein kinase regulator of UbiI activity which is involved in aerobic coenzyme Q (ubiquinone) biosynthesis.</text>
</comment>
<comment type="pathway">
    <text>Cofactor biosynthesis; ubiquinone biosynthesis [regulation].</text>
</comment>
<comment type="subcellular location">
    <subcellularLocation>
        <location evidence="1">Cell inner membrane</location>
        <topology evidence="1">Multi-pass membrane protein</topology>
    </subcellularLocation>
</comment>
<comment type="similarity">
    <text evidence="1">Belongs to the ABC1 family. UbiB subfamily.</text>
</comment>
<feature type="chain" id="PRO_1000123912" description="Probable protein kinase UbiB">
    <location>
        <begin position="1"/>
        <end position="546"/>
    </location>
</feature>
<feature type="transmembrane region" description="Helical" evidence="1">
    <location>
        <begin position="501"/>
        <end position="521"/>
    </location>
</feature>
<feature type="transmembrane region" description="Helical" evidence="1">
    <location>
        <begin position="522"/>
        <end position="542"/>
    </location>
</feature>
<feature type="domain" description="Protein kinase" evidence="1">
    <location>
        <begin position="124"/>
        <end position="502"/>
    </location>
</feature>
<feature type="active site" description="Proton acceptor" evidence="1">
    <location>
        <position position="288"/>
    </location>
</feature>
<feature type="binding site" evidence="1">
    <location>
        <begin position="130"/>
        <end position="138"/>
    </location>
    <ligand>
        <name>ATP</name>
        <dbReference type="ChEBI" id="CHEBI:30616"/>
    </ligand>
</feature>
<feature type="binding site" evidence="1">
    <location>
        <position position="153"/>
    </location>
    <ligand>
        <name>ATP</name>
        <dbReference type="ChEBI" id="CHEBI:30616"/>
    </ligand>
</feature>
<keyword id="KW-0067">ATP-binding</keyword>
<keyword id="KW-0997">Cell inner membrane</keyword>
<keyword id="KW-1003">Cell membrane</keyword>
<keyword id="KW-0418">Kinase</keyword>
<keyword id="KW-0472">Membrane</keyword>
<keyword id="KW-0547">Nucleotide-binding</keyword>
<keyword id="KW-0808">Transferase</keyword>
<keyword id="KW-0812">Transmembrane</keyword>
<keyword id="KW-1133">Transmembrane helix</keyword>
<keyword id="KW-0831">Ubiquinone biosynthesis</keyword>
<proteinExistence type="inferred from homology"/>
<dbReference type="EC" id="2.7.-.-" evidence="1"/>
<dbReference type="EMBL" id="CP000964">
    <property type="protein sequence ID" value="ACI09363.1"/>
    <property type="molecule type" value="Genomic_DNA"/>
</dbReference>
<dbReference type="SMR" id="B5XYH9"/>
<dbReference type="KEGG" id="kpe:KPK_5342"/>
<dbReference type="HOGENOM" id="CLU_006533_0_0_6"/>
<dbReference type="UniPathway" id="UPA00232"/>
<dbReference type="Proteomes" id="UP000001734">
    <property type="component" value="Chromosome"/>
</dbReference>
<dbReference type="GO" id="GO:0005886">
    <property type="term" value="C:plasma membrane"/>
    <property type="evidence" value="ECO:0007669"/>
    <property type="project" value="UniProtKB-SubCell"/>
</dbReference>
<dbReference type="GO" id="GO:0005524">
    <property type="term" value="F:ATP binding"/>
    <property type="evidence" value="ECO:0007669"/>
    <property type="project" value="UniProtKB-KW"/>
</dbReference>
<dbReference type="GO" id="GO:0004672">
    <property type="term" value="F:protein kinase activity"/>
    <property type="evidence" value="ECO:0007669"/>
    <property type="project" value="UniProtKB-UniRule"/>
</dbReference>
<dbReference type="GO" id="GO:0010795">
    <property type="term" value="P:regulation of ubiquinone biosynthetic process"/>
    <property type="evidence" value="ECO:0007669"/>
    <property type="project" value="UniProtKB-UniRule"/>
</dbReference>
<dbReference type="GO" id="GO:0006744">
    <property type="term" value="P:ubiquinone biosynthetic process"/>
    <property type="evidence" value="ECO:0007669"/>
    <property type="project" value="UniProtKB-UniPathway"/>
</dbReference>
<dbReference type="CDD" id="cd13972">
    <property type="entry name" value="UbiB"/>
    <property type="match status" value="1"/>
</dbReference>
<dbReference type="HAMAP" id="MF_00414">
    <property type="entry name" value="UbiB"/>
    <property type="match status" value="1"/>
</dbReference>
<dbReference type="InterPro" id="IPR004147">
    <property type="entry name" value="ABC1_dom"/>
</dbReference>
<dbReference type="InterPro" id="IPR011009">
    <property type="entry name" value="Kinase-like_dom_sf"/>
</dbReference>
<dbReference type="InterPro" id="IPR010232">
    <property type="entry name" value="UbiB"/>
</dbReference>
<dbReference type="InterPro" id="IPR045308">
    <property type="entry name" value="UbiB_bact"/>
</dbReference>
<dbReference type="InterPro" id="IPR050154">
    <property type="entry name" value="UbiB_kinase"/>
</dbReference>
<dbReference type="NCBIfam" id="NF003404">
    <property type="entry name" value="PRK04750.1"/>
    <property type="match status" value="1"/>
</dbReference>
<dbReference type="NCBIfam" id="TIGR01982">
    <property type="entry name" value="UbiB"/>
    <property type="match status" value="1"/>
</dbReference>
<dbReference type="PANTHER" id="PTHR10566">
    <property type="entry name" value="CHAPERONE-ACTIVITY OF BC1 COMPLEX CABC1 -RELATED"/>
    <property type="match status" value="1"/>
</dbReference>
<dbReference type="PANTHER" id="PTHR10566:SF113">
    <property type="entry name" value="PROTEIN ACTIVITY OF BC1 COMPLEX KINASE 7, CHLOROPLASTIC"/>
    <property type="match status" value="1"/>
</dbReference>
<dbReference type="Pfam" id="PF03109">
    <property type="entry name" value="ABC1"/>
    <property type="match status" value="1"/>
</dbReference>
<dbReference type="SUPFAM" id="SSF56112">
    <property type="entry name" value="Protein kinase-like (PK-like)"/>
    <property type="match status" value="1"/>
</dbReference>
<evidence type="ECO:0000255" key="1">
    <source>
        <dbReference type="HAMAP-Rule" id="MF_00414"/>
    </source>
</evidence>